<organism>
    <name type="scientific">Saccharomyces cerevisiae (strain YJM789)</name>
    <name type="common">Baker's yeast</name>
    <dbReference type="NCBI Taxonomy" id="307796"/>
    <lineage>
        <taxon>Eukaryota</taxon>
        <taxon>Fungi</taxon>
        <taxon>Dikarya</taxon>
        <taxon>Ascomycota</taxon>
        <taxon>Saccharomycotina</taxon>
        <taxon>Saccharomycetes</taxon>
        <taxon>Saccharomycetales</taxon>
        <taxon>Saccharomycetaceae</taxon>
        <taxon>Saccharomyces</taxon>
    </lineage>
</organism>
<accession>A6ZU71</accession>
<protein>
    <recommendedName>
        <fullName>Ribosome biogenesis protein NSA1</fullName>
    </recommendedName>
    <alternativeName>
        <fullName>NOP7-associated protein 1</fullName>
    </alternativeName>
</protein>
<evidence type="ECO:0000250" key="1"/>
<evidence type="ECO:0000305" key="2"/>
<keyword id="KW-0539">Nucleus</keyword>
<keyword id="KW-0690">Ribosome biogenesis</keyword>
<keyword id="KW-0698">rRNA processing</keyword>
<sequence length="463" mass="51933">MRLLVSCVDSGSIKEVLCNIGTDTSVQSALQPFHVAPHLAEGLKAYVDRMWVISEDEAILARNSGVVELVKISKHLKENEALQVDPKGESKNEKSLSDDLPKFDISEFEITSSVSDLFDDAKLESLSSKSVKRTKLVDGFVTLCPIKKDSSNNTFVAATKSGLLHIIKKGEDKKLIKLASLGLKAPVEFLQLYDLEDTDTDKYIFAYGGEENLIKLVEIDSSFQSLKQIWEAKNVKNDRLDMRVPVWPMALRFLEPSPGKTEKGKLNYQFAAITRWSHLTKYSTQHGRKPFAQIDLLPNREPLSQMEVFDAKGENVVSLLGNFQSETCNDLNVISTDYKKNVFKFDGNGRMLGKVGRDDITGSSTYIHVHDGKYLLQGGLDRYVRIFDIKTNKMLVKVYVGSRINFIVMLDDVEIEMPLSPSAKAAKEKQKRKVTELEEDADELWNKLEGKVAASKASKKSKI</sequence>
<comment type="function">
    <text evidence="1">Involved in the biogenesis of the 60S ribosomal subunit.</text>
</comment>
<comment type="subunit">
    <text evidence="1">Component of the pre-66S ribosomal particle. Interacts with NOP7, RRP1 and RRP5 (By similarity).</text>
</comment>
<comment type="subcellular location">
    <subcellularLocation>
        <location evidence="1">Nucleus</location>
        <location evidence="1">Nucleolus</location>
    </subcellularLocation>
</comment>
<comment type="similarity">
    <text evidence="2">Belongs to the NSA1 family.</text>
</comment>
<name>NSA1_YEAS7</name>
<feature type="chain" id="PRO_0000320406" description="Ribosome biogenesis protein NSA1">
    <location>
        <begin position="1"/>
        <end position="463"/>
    </location>
</feature>
<proteinExistence type="inferred from homology"/>
<gene>
    <name type="primary">NSA1</name>
    <name type="ORF">SCY_1954</name>
</gene>
<reference key="1">
    <citation type="journal article" date="2007" name="Proc. Natl. Acad. Sci. U.S.A.">
        <title>Genome sequencing and comparative analysis of Saccharomyces cerevisiae strain YJM789.</title>
        <authorList>
            <person name="Wei W."/>
            <person name="McCusker J.H."/>
            <person name="Hyman R.W."/>
            <person name="Jones T."/>
            <person name="Ning Y."/>
            <person name="Cao Z."/>
            <person name="Gu Z."/>
            <person name="Bruno D."/>
            <person name="Miranda M."/>
            <person name="Nguyen M."/>
            <person name="Wilhelmy J."/>
            <person name="Komp C."/>
            <person name="Tamse R."/>
            <person name="Wang X."/>
            <person name="Jia P."/>
            <person name="Luedi P."/>
            <person name="Oefner P.J."/>
            <person name="David L."/>
            <person name="Dietrich F.S."/>
            <person name="Li Y."/>
            <person name="Davis R.W."/>
            <person name="Steinmetz L.M."/>
        </authorList>
    </citation>
    <scope>NUCLEOTIDE SEQUENCE [LARGE SCALE GENOMIC DNA]</scope>
    <source>
        <strain>YJM789</strain>
    </source>
</reference>
<dbReference type="EMBL" id="AAFW02000099">
    <property type="protein sequence ID" value="EDN62009.1"/>
    <property type="molecule type" value="Genomic_DNA"/>
</dbReference>
<dbReference type="SMR" id="A6ZU71"/>
<dbReference type="HOGENOM" id="CLU_033769_4_0_1"/>
<dbReference type="OrthoDB" id="32593at4893"/>
<dbReference type="Proteomes" id="UP000007060">
    <property type="component" value="Unassembled WGS sequence"/>
</dbReference>
<dbReference type="GO" id="GO:0005730">
    <property type="term" value="C:nucleolus"/>
    <property type="evidence" value="ECO:0007669"/>
    <property type="project" value="UniProtKB-SubCell"/>
</dbReference>
<dbReference type="GO" id="GO:0030687">
    <property type="term" value="C:preribosome, large subunit precursor"/>
    <property type="evidence" value="ECO:0007669"/>
    <property type="project" value="TreeGrafter"/>
</dbReference>
<dbReference type="GO" id="GO:0042273">
    <property type="term" value="P:ribosomal large subunit biogenesis"/>
    <property type="evidence" value="ECO:0007669"/>
    <property type="project" value="InterPro"/>
</dbReference>
<dbReference type="GO" id="GO:0006364">
    <property type="term" value="P:rRNA processing"/>
    <property type="evidence" value="ECO:0007669"/>
    <property type="project" value="UniProtKB-KW"/>
</dbReference>
<dbReference type="CDD" id="cd22858">
    <property type="entry name" value="Nsa1"/>
    <property type="match status" value="1"/>
</dbReference>
<dbReference type="InterPro" id="IPR036322">
    <property type="entry name" value="WD40_repeat_dom_sf"/>
</dbReference>
<dbReference type="InterPro" id="IPR037379">
    <property type="entry name" value="WDR74/Nsa1"/>
</dbReference>
<dbReference type="PANTHER" id="PTHR16038">
    <property type="entry name" value="NOP SEVEN ASSOCIATED PROTEIN 1"/>
    <property type="match status" value="1"/>
</dbReference>
<dbReference type="PANTHER" id="PTHR16038:SF4">
    <property type="entry name" value="WD REPEAT-CONTAINING PROTEIN 74"/>
    <property type="match status" value="1"/>
</dbReference>
<dbReference type="SUPFAM" id="SSF50978">
    <property type="entry name" value="WD40 repeat-like"/>
    <property type="match status" value="1"/>
</dbReference>